<name>GMHA_ESCF3</name>
<proteinExistence type="inferred from homology"/>
<accession>B7LW94</accession>
<evidence type="ECO:0000255" key="1">
    <source>
        <dbReference type="HAMAP-Rule" id="MF_00067"/>
    </source>
</evidence>
<sequence>MYQDLIRNELNEAAETLANFLKDDANIHAIQRAAVLLADSFKAGGKVLSCGNGGSHCDAMHFAEELTGRYRENRPGYPAIAISDVSHISCVGNDFGFNDIFSRYVEAVGREGDVLLGISTSGNSANVIKAIAAAREKGMKVITLTGKDGGKMAGMADIEIRVPHFGYADRIQEIHIKVIHILIQLIEKEMAK</sequence>
<gene>
    <name evidence="1" type="primary">gmhA</name>
    <name type="ordered locus">EFER_0248</name>
</gene>
<organism>
    <name type="scientific">Escherichia fergusonii (strain ATCC 35469 / DSM 13698 / CCUG 18766 / IAM 14443 / JCM 21226 / LMG 7866 / NBRC 102419 / NCTC 12128 / CDC 0568-73)</name>
    <dbReference type="NCBI Taxonomy" id="585054"/>
    <lineage>
        <taxon>Bacteria</taxon>
        <taxon>Pseudomonadati</taxon>
        <taxon>Pseudomonadota</taxon>
        <taxon>Gammaproteobacteria</taxon>
        <taxon>Enterobacterales</taxon>
        <taxon>Enterobacteriaceae</taxon>
        <taxon>Escherichia</taxon>
    </lineage>
</organism>
<comment type="function">
    <text evidence="1">Catalyzes the isomerization of sedoheptulose 7-phosphate in D-glycero-D-manno-heptose 7-phosphate.</text>
</comment>
<comment type="catalytic activity">
    <reaction evidence="1">
        <text>2 D-sedoheptulose 7-phosphate = D-glycero-alpha-D-manno-heptose 7-phosphate + D-glycero-beta-D-manno-heptose 7-phosphate</text>
        <dbReference type="Rhea" id="RHEA:27489"/>
        <dbReference type="ChEBI" id="CHEBI:57483"/>
        <dbReference type="ChEBI" id="CHEBI:60203"/>
        <dbReference type="ChEBI" id="CHEBI:60204"/>
        <dbReference type="EC" id="5.3.1.28"/>
    </reaction>
</comment>
<comment type="cofactor">
    <cofactor evidence="1">
        <name>Zn(2+)</name>
        <dbReference type="ChEBI" id="CHEBI:29105"/>
    </cofactor>
    <text evidence="1">Binds 1 zinc ion per subunit.</text>
</comment>
<comment type="pathway">
    <text evidence="1">Carbohydrate biosynthesis; D-glycero-D-manno-heptose 7-phosphate biosynthesis; D-glycero-alpha-D-manno-heptose 7-phosphate and D-glycero-beta-D-manno-heptose 7-phosphate from sedoheptulose 7-phosphate: step 1/1.</text>
</comment>
<comment type="subunit">
    <text evidence="1">Homotetramer.</text>
</comment>
<comment type="subcellular location">
    <subcellularLocation>
        <location evidence="1">Cytoplasm</location>
    </subcellularLocation>
</comment>
<comment type="miscellaneous">
    <text evidence="1">The reaction produces a racemic mixture of D-glycero-alpha-D-manno-heptose 7-phosphate and D-glycero-beta-D-manno-heptose 7-phosphate.</text>
</comment>
<comment type="similarity">
    <text evidence="1">Belongs to the SIS family. GmhA subfamily.</text>
</comment>
<dbReference type="EC" id="5.3.1.28" evidence="1"/>
<dbReference type="EMBL" id="CU928158">
    <property type="protein sequence ID" value="CAQ87817.1"/>
    <property type="molecule type" value="Genomic_DNA"/>
</dbReference>
<dbReference type="RefSeq" id="WP_012599876.1">
    <property type="nucleotide sequence ID" value="NC_011740.1"/>
</dbReference>
<dbReference type="SMR" id="B7LW94"/>
<dbReference type="GeneID" id="75058672"/>
<dbReference type="KEGG" id="efe:EFER_0248"/>
<dbReference type="HOGENOM" id="CLU_080999_4_0_6"/>
<dbReference type="OrthoDB" id="9810929at2"/>
<dbReference type="UniPathway" id="UPA00041">
    <property type="reaction ID" value="UER00436"/>
</dbReference>
<dbReference type="Proteomes" id="UP000000745">
    <property type="component" value="Chromosome"/>
</dbReference>
<dbReference type="GO" id="GO:0005737">
    <property type="term" value="C:cytoplasm"/>
    <property type="evidence" value="ECO:0007669"/>
    <property type="project" value="UniProtKB-SubCell"/>
</dbReference>
<dbReference type="GO" id="GO:0097367">
    <property type="term" value="F:carbohydrate derivative binding"/>
    <property type="evidence" value="ECO:0007669"/>
    <property type="project" value="InterPro"/>
</dbReference>
<dbReference type="GO" id="GO:0008968">
    <property type="term" value="F:D-sedoheptulose 7-phosphate isomerase activity"/>
    <property type="evidence" value="ECO:0007669"/>
    <property type="project" value="UniProtKB-UniRule"/>
</dbReference>
<dbReference type="GO" id="GO:0008270">
    <property type="term" value="F:zinc ion binding"/>
    <property type="evidence" value="ECO:0007669"/>
    <property type="project" value="UniProtKB-UniRule"/>
</dbReference>
<dbReference type="GO" id="GO:0005975">
    <property type="term" value="P:carbohydrate metabolic process"/>
    <property type="evidence" value="ECO:0007669"/>
    <property type="project" value="UniProtKB-UniRule"/>
</dbReference>
<dbReference type="GO" id="GO:2001061">
    <property type="term" value="P:D-glycero-D-manno-heptose 7-phosphate biosynthetic process"/>
    <property type="evidence" value="ECO:0007669"/>
    <property type="project" value="UniProtKB-UniPathway"/>
</dbReference>
<dbReference type="CDD" id="cd05006">
    <property type="entry name" value="SIS_GmhA"/>
    <property type="match status" value="1"/>
</dbReference>
<dbReference type="FunFam" id="3.40.50.10490:FF:000013">
    <property type="entry name" value="Phosphoheptose isomerase"/>
    <property type="match status" value="1"/>
</dbReference>
<dbReference type="Gene3D" id="3.40.50.10490">
    <property type="entry name" value="Glucose-6-phosphate isomerase like protein, domain 1"/>
    <property type="match status" value="1"/>
</dbReference>
<dbReference type="HAMAP" id="MF_00067">
    <property type="entry name" value="GmhA"/>
    <property type="match status" value="1"/>
</dbReference>
<dbReference type="InterPro" id="IPR035461">
    <property type="entry name" value="GmhA/DiaA"/>
</dbReference>
<dbReference type="InterPro" id="IPR004515">
    <property type="entry name" value="Phosphoheptose_Isoase"/>
</dbReference>
<dbReference type="InterPro" id="IPR001347">
    <property type="entry name" value="SIS_dom"/>
</dbReference>
<dbReference type="InterPro" id="IPR046348">
    <property type="entry name" value="SIS_dom_sf"/>
</dbReference>
<dbReference type="InterPro" id="IPR050099">
    <property type="entry name" value="SIS_GmhA/DiaA_subfam"/>
</dbReference>
<dbReference type="NCBIfam" id="TIGR00441">
    <property type="entry name" value="gmhA"/>
    <property type="match status" value="1"/>
</dbReference>
<dbReference type="NCBIfam" id="NF001628">
    <property type="entry name" value="PRK00414.1"/>
    <property type="match status" value="1"/>
</dbReference>
<dbReference type="PANTHER" id="PTHR30390:SF7">
    <property type="entry name" value="PHOSPHOHEPTOSE ISOMERASE"/>
    <property type="match status" value="1"/>
</dbReference>
<dbReference type="PANTHER" id="PTHR30390">
    <property type="entry name" value="SEDOHEPTULOSE 7-PHOSPHATE ISOMERASE / DNAA INITIATOR-ASSOCIATING FACTOR FOR REPLICATION INITIATION"/>
    <property type="match status" value="1"/>
</dbReference>
<dbReference type="Pfam" id="PF13580">
    <property type="entry name" value="SIS_2"/>
    <property type="match status" value="1"/>
</dbReference>
<dbReference type="SUPFAM" id="SSF53697">
    <property type="entry name" value="SIS domain"/>
    <property type="match status" value="1"/>
</dbReference>
<dbReference type="PROSITE" id="PS51464">
    <property type="entry name" value="SIS"/>
    <property type="match status" value="1"/>
</dbReference>
<feature type="chain" id="PRO_1000197005" description="Phosphoheptose isomerase">
    <location>
        <begin position="1"/>
        <end position="192"/>
    </location>
</feature>
<feature type="domain" description="SIS" evidence="1">
    <location>
        <begin position="37"/>
        <end position="192"/>
    </location>
</feature>
<feature type="binding site" evidence="1">
    <location>
        <begin position="52"/>
        <end position="54"/>
    </location>
    <ligand>
        <name>substrate</name>
    </ligand>
</feature>
<feature type="binding site" evidence="1">
    <location>
        <position position="61"/>
    </location>
    <ligand>
        <name>Zn(2+)</name>
        <dbReference type="ChEBI" id="CHEBI:29105"/>
    </ligand>
</feature>
<feature type="binding site" evidence="1">
    <location>
        <position position="65"/>
    </location>
    <ligand>
        <name>substrate</name>
    </ligand>
</feature>
<feature type="binding site" evidence="1">
    <location>
        <position position="65"/>
    </location>
    <ligand>
        <name>Zn(2+)</name>
        <dbReference type="ChEBI" id="CHEBI:29105"/>
    </ligand>
</feature>
<feature type="binding site" evidence="1">
    <location>
        <begin position="93"/>
        <end position="94"/>
    </location>
    <ligand>
        <name>substrate</name>
    </ligand>
</feature>
<feature type="binding site" evidence="1">
    <location>
        <begin position="119"/>
        <end position="121"/>
    </location>
    <ligand>
        <name>substrate</name>
    </ligand>
</feature>
<feature type="binding site" evidence="1">
    <location>
        <position position="124"/>
    </location>
    <ligand>
        <name>substrate</name>
    </ligand>
</feature>
<feature type="binding site" evidence="1">
    <location>
        <position position="172"/>
    </location>
    <ligand>
        <name>substrate</name>
    </ligand>
</feature>
<feature type="binding site" evidence="1">
    <location>
        <position position="172"/>
    </location>
    <ligand>
        <name>Zn(2+)</name>
        <dbReference type="ChEBI" id="CHEBI:29105"/>
    </ligand>
</feature>
<feature type="binding site" evidence="1">
    <location>
        <position position="180"/>
    </location>
    <ligand>
        <name>Zn(2+)</name>
        <dbReference type="ChEBI" id="CHEBI:29105"/>
    </ligand>
</feature>
<protein>
    <recommendedName>
        <fullName evidence="1">Phosphoheptose isomerase</fullName>
        <ecNumber evidence="1">5.3.1.28</ecNumber>
    </recommendedName>
    <alternativeName>
        <fullName evidence="1">Sedoheptulose 7-phosphate isomerase</fullName>
    </alternativeName>
</protein>
<keyword id="KW-0119">Carbohydrate metabolism</keyword>
<keyword id="KW-0963">Cytoplasm</keyword>
<keyword id="KW-0413">Isomerase</keyword>
<keyword id="KW-0479">Metal-binding</keyword>
<keyword id="KW-0862">Zinc</keyword>
<reference key="1">
    <citation type="journal article" date="2009" name="PLoS Genet.">
        <title>Organised genome dynamics in the Escherichia coli species results in highly diverse adaptive paths.</title>
        <authorList>
            <person name="Touchon M."/>
            <person name="Hoede C."/>
            <person name="Tenaillon O."/>
            <person name="Barbe V."/>
            <person name="Baeriswyl S."/>
            <person name="Bidet P."/>
            <person name="Bingen E."/>
            <person name="Bonacorsi S."/>
            <person name="Bouchier C."/>
            <person name="Bouvet O."/>
            <person name="Calteau A."/>
            <person name="Chiapello H."/>
            <person name="Clermont O."/>
            <person name="Cruveiller S."/>
            <person name="Danchin A."/>
            <person name="Diard M."/>
            <person name="Dossat C."/>
            <person name="Karoui M.E."/>
            <person name="Frapy E."/>
            <person name="Garry L."/>
            <person name="Ghigo J.M."/>
            <person name="Gilles A.M."/>
            <person name="Johnson J."/>
            <person name="Le Bouguenec C."/>
            <person name="Lescat M."/>
            <person name="Mangenot S."/>
            <person name="Martinez-Jehanne V."/>
            <person name="Matic I."/>
            <person name="Nassif X."/>
            <person name="Oztas S."/>
            <person name="Petit M.A."/>
            <person name="Pichon C."/>
            <person name="Rouy Z."/>
            <person name="Ruf C.S."/>
            <person name="Schneider D."/>
            <person name="Tourret J."/>
            <person name="Vacherie B."/>
            <person name="Vallenet D."/>
            <person name="Medigue C."/>
            <person name="Rocha E.P.C."/>
            <person name="Denamur E."/>
        </authorList>
    </citation>
    <scope>NUCLEOTIDE SEQUENCE [LARGE SCALE GENOMIC DNA]</scope>
    <source>
        <strain>ATCC 35469 / DSM 13698 / BCRC 15582 / CCUG 18766 / IAM 14443 / JCM 21226 / LMG 7866 / NBRC 102419 / NCTC 12128 / CDC 0568-73</strain>
    </source>
</reference>